<name>AGBL_LYODE</name>
<accession>A7UNK4</accession>
<evidence type="ECO:0000269" key="1">
    <source>
    </source>
</evidence>
<evidence type="ECO:0000303" key="2">
    <source>
    </source>
</evidence>
<evidence type="ECO:0000305" key="3"/>
<evidence type="ECO:0000312" key="4">
    <source>
        <dbReference type="EMBL" id="ABU55417.1"/>
    </source>
</evidence>
<evidence type="ECO:0007829" key="5">
    <source>
        <dbReference type="PDB" id="4NDS"/>
    </source>
</evidence>
<proteinExistence type="evidence at protein level"/>
<protein>
    <recommendedName>
        <fullName evidence="2">Alpha-galactosyl-binding lectin</fullName>
    </recommendedName>
</protein>
<comment type="function">
    <text evidence="1">Alpha-galactosyl-binding lectin with preference for galactose-alpha-1,4-galactose.</text>
</comment>
<comment type="subunit">
    <text evidence="1">Homodimer.</text>
</comment>
<comment type="PTM">
    <text evidence="1">Contains three disulfide bonds.</text>
</comment>
<comment type="mass spectrometry" mass="10279.0" error="10.3" method="MALDI" evidence="1"/>
<comment type="mass spectrometry" mass="10276.0" error="1.0" method="Electrospray" evidence="1"/>
<feature type="chain" id="PRO_0000371800" description="Alpha-galactosyl-binding lectin">
    <location>
        <begin position="1"/>
        <end position="94"/>
    </location>
</feature>
<feature type="helix" evidence="5">
    <location>
        <begin position="16"/>
        <end position="30"/>
    </location>
</feature>
<feature type="strand" evidence="5">
    <location>
        <begin position="32"/>
        <end position="40"/>
    </location>
</feature>
<feature type="strand" evidence="5">
    <location>
        <begin position="43"/>
        <end position="49"/>
    </location>
</feature>
<feature type="helix" evidence="5">
    <location>
        <begin position="54"/>
        <end position="68"/>
    </location>
</feature>
<feature type="turn" evidence="5">
    <location>
        <begin position="69"/>
        <end position="71"/>
    </location>
</feature>
<feature type="strand" evidence="5">
    <location>
        <begin position="72"/>
        <end position="79"/>
    </location>
</feature>
<feature type="strand" evidence="5">
    <location>
        <begin position="82"/>
        <end position="87"/>
    </location>
</feature>
<dbReference type="EMBL" id="EU091354">
    <property type="protein sequence ID" value="ABU55417.1"/>
    <property type="molecule type" value="mRNA"/>
</dbReference>
<dbReference type="PDB" id="4NDS">
    <property type="method" value="X-ray"/>
    <property type="resolution" value="1.00 A"/>
    <property type="chains" value="A/B=1-94"/>
</dbReference>
<dbReference type="PDB" id="4NDT">
    <property type="method" value="X-ray"/>
    <property type="resolution" value="1.03 A"/>
    <property type="chains" value="A=1-94"/>
</dbReference>
<dbReference type="PDB" id="4NDU">
    <property type="method" value="X-ray"/>
    <property type="resolution" value="1.30 A"/>
    <property type="chains" value="A/B=1-94"/>
</dbReference>
<dbReference type="PDB" id="4NDV">
    <property type="method" value="X-ray"/>
    <property type="resolution" value="1.30 A"/>
    <property type="chains" value="A/B=1-94"/>
</dbReference>
<dbReference type="PDBsum" id="4NDS"/>
<dbReference type="PDBsum" id="4NDT"/>
<dbReference type="PDBsum" id="4NDU"/>
<dbReference type="PDBsum" id="4NDV"/>
<dbReference type="SMR" id="A7UNK4"/>
<dbReference type="UniLectin" id="A7UNK4"/>
<dbReference type="EvolutionaryTrace" id="A7UNK4"/>
<dbReference type="GO" id="GO:0005534">
    <property type="term" value="F:galactose binding"/>
    <property type="evidence" value="ECO:0000314"/>
    <property type="project" value="UniProtKB"/>
</dbReference>
<dbReference type="CDD" id="cd22811">
    <property type="entry name" value="agbl-like"/>
    <property type="match status" value="1"/>
</dbReference>
<dbReference type="InterPro" id="IPR048508">
    <property type="entry name" value="LDL"/>
</dbReference>
<dbReference type="Pfam" id="PF21691">
    <property type="entry name" value="LDL"/>
    <property type="match status" value="1"/>
</dbReference>
<reference evidence="3 4" key="1">
    <citation type="journal article" date="2007" name="Arch. Biochem. Biophys.">
        <title>A new alpha-galactosyl-binding protein from the mushroom Lyophyllum decastes.</title>
        <authorList>
            <person name="Goldstein I.J."/>
            <person name="Winter H.C."/>
            <person name="Aurandt J."/>
            <person name="Confer L."/>
            <person name="Adamson J.T."/>
            <person name="Hakansson K."/>
            <person name="Remmer H."/>
        </authorList>
    </citation>
    <scope>NUCLEOTIDE SEQUENCE [MRNA]</scope>
    <scope>PROTEIN SEQUENCE OF 1-30</scope>
    <scope>FUNCTION</scope>
    <scope>SUBUNIT</scope>
    <scope>MASS SPECTROMETRY</scope>
    <source>
        <tissue evidence="1">Fruiting body</tissue>
    </source>
</reference>
<keyword id="KW-0002">3D-structure</keyword>
<keyword id="KW-0903">Direct protein sequencing</keyword>
<keyword id="KW-1015">Disulfide bond</keyword>
<keyword id="KW-0430">Lectin</keyword>
<organism>
    <name type="scientific">Lyophyllum decastes</name>
    <name type="common">Fried chicken mushroom</name>
    <dbReference type="NCBI Taxonomy" id="64660"/>
    <lineage>
        <taxon>Eukaryota</taxon>
        <taxon>Fungi</taxon>
        <taxon>Dikarya</taxon>
        <taxon>Basidiomycota</taxon>
        <taxon>Agaricomycotina</taxon>
        <taxon>Agaricomycetes</taxon>
        <taxon>Agaricomycetidae</taxon>
        <taxon>Agaricales</taxon>
        <taxon>Tricholomatineae</taxon>
        <taxon>Lyophyllaceae</taxon>
        <taxon>Lyophyllum</taxon>
    </lineage>
</organism>
<sequence length="94" mass="10282">ACWKANSCPGSAFESKDRLRSFALLYCRYNYKPPYGQGAFGYASAVSTHGWETEAQCINTFEQIITSCHGQSNGGTLELNSGRLSLAFGNCEEL</sequence>